<feature type="chain" id="PRO_0000281817" description="Histone-lysine N-methyltransferase Su(var)3-9">
    <location>
        <begin position="1"/>
        <end position="633"/>
    </location>
</feature>
<feature type="domain" description="Chromo" evidence="3">
    <location>
        <begin position="213"/>
        <end position="271"/>
    </location>
</feature>
<feature type="domain" description="Pre-SET" evidence="5">
    <location>
        <begin position="407"/>
        <end position="472"/>
    </location>
</feature>
<feature type="domain" description="SET" evidence="6">
    <location>
        <begin position="475"/>
        <end position="601"/>
    </location>
</feature>
<feature type="domain" description="Post-SET" evidence="4">
    <location>
        <begin position="617"/>
        <end position="633"/>
    </location>
</feature>
<feature type="binding site" evidence="1">
    <location>
        <position position="409"/>
    </location>
    <ligand>
        <name>Zn(2+)</name>
        <dbReference type="ChEBI" id="CHEBI:29105"/>
        <label>1</label>
    </ligand>
</feature>
<feature type="binding site" evidence="1">
    <location>
        <position position="409"/>
    </location>
    <ligand>
        <name>Zn(2+)</name>
        <dbReference type="ChEBI" id="CHEBI:29105"/>
        <label>2</label>
    </ligand>
</feature>
<feature type="binding site" evidence="1">
    <location>
        <position position="411"/>
    </location>
    <ligand>
        <name>Zn(2+)</name>
        <dbReference type="ChEBI" id="CHEBI:29105"/>
        <label>1</label>
    </ligand>
</feature>
<feature type="binding site" evidence="1">
    <location>
        <position position="419"/>
    </location>
    <ligand>
        <name>Zn(2+)</name>
        <dbReference type="ChEBI" id="CHEBI:29105"/>
        <label>1</label>
    </ligand>
</feature>
<feature type="binding site" evidence="1">
    <location>
        <position position="419"/>
    </location>
    <ligand>
        <name>Zn(2+)</name>
        <dbReference type="ChEBI" id="CHEBI:29105"/>
        <label>3</label>
    </ligand>
</feature>
<feature type="binding site" evidence="1">
    <location>
        <position position="425"/>
    </location>
    <ligand>
        <name>Zn(2+)</name>
        <dbReference type="ChEBI" id="CHEBI:29105"/>
        <label>1</label>
    </ligand>
</feature>
<feature type="binding site" evidence="1">
    <location>
        <position position="426"/>
    </location>
    <ligand>
        <name>Zn(2+)</name>
        <dbReference type="ChEBI" id="CHEBI:29105"/>
        <label>1</label>
    </ligand>
</feature>
<feature type="binding site" evidence="1">
    <location>
        <position position="426"/>
    </location>
    <ligand>
        <name>Zn(2+)</name>
        <dbReference type="ChEBI" id="CHEBI:29105"/>
        <label>2</label>
    </ligand>
</feature>
<feature type="binding site" evidence="1">
    <location>
        <position position="454"/>
    </location>
    <ligand>
        <name>Zn(2+)</name>
        <dbReference type="ChEBI" id="CHEBI:29105"/>
        <label>2</label>
    </ligand>
</feature>
<feature type="binding site" evidence="1">
    <location>
        <position position="454"/>
    </location>
    <ligand>
        <name>Zn(2+)</name>
        <dbReference type="ChEBI" id="CHEBI:29105"/>
        <label>3</label>
    </ligand>
</feature>
<feature type="binding site" evidence="1">
    <location>
        <position position="458"/>
    </location>
    <ligand>
        <name>Zn(2+)</name>
        <dbReference type="ChEBI" id="CHEBI:29105"/>
        <label>2</label>
    </ligand>
</feature>
<feature type="binding site" evidence="1">
    <location>
        <position position="460"/>
    </location>
    <ligand>
        <name>Zn(2+)</name>
        <dbReference type="ChEBI" id="CHEBI:29105"/>
        <label>3</label>
    </ligand>
</feature>
<feature type="binding site" evidence="1">
    <location>
        <position position="464"/>
    </location>
    <ligand>
        <name>Zn(2+)</name>
        <dbReference type="ChEBI" id="CHEBI:29105"/>
        <label>3</label>
    </ligand>
</feature>
<feature type="binding site" evidence="1">
    <location>
        <begin position="486"/>
        <end position="488"/>
    </location>
    <ligand>
        <name>S-adenosyl-L-methionine</name>
        <dbReference type="ChEBI" id="CHEBI:59789"/>
    </ligand>
</feature>
<feature type="binding site" evidence="6">
    <location>
        <position position="529"/>
    </location>
    <ligand>
        <name>S-adenosyl-L-methionine</name>
        <dbReference type="ChEBI" id="CHEBI:59789"/>
    </ligand>
</feature>
<feature type="binding site" evidence="1">
    <location>
        <begin position="558"/>
        <end position="559"/>
    </location>
    <ligand>
        <name>S-adenosyl-L-methionine</name>
        <dbReference type="ChEBI" id="CHEBI:59789"/>
    </ligand>
</feature>
<feature type="binding site" evidence="1">
    <location>
        <position position="561"/>
    </location>
    <ligand>
        <name>Zn(2+)</name>
        <dbReference type="ChEBI" id="CHEBI:29105"/>
        <label>4</label>
    </ligand>
</feature>
<feature type="binding site" evidence="1">
    <location>
        <position position="621"/>
    </location>
    <ligand>
        <name>Zn(2+)</name>
        <dbReference type="ChEBI" id="CHEBI:29105"/>
        <label>4</label>
    </ligand>
</feature>
<feature type="binding site" evidence="1">
    <location>
        <position position="623"/>
    </location>
    <ligand>
        <name>Zn(2+)</name>
        <dbReference type="ChEBI" id="CHEBI:29105"/>
        <label>4</label>
    </ligand>
</feature>
<feature type="binding site" evidence="1">
    <location>
        <position position="628"/>
    </location>
    <ligand>
        <name>Zn(2+)</name>
        <dbReference type="ChEBI" id="CHEBI:29105"/>
        <label>4</label>
    </ligand>
</feature>
<protein>
    <recommendedName>
        <fullName>Histone-lysine N-methyltransferase Su(var)3-9</fullName>
        <ecNumber evidence="2">2.1.1.355</ecNumber>
    </recommendedName>
    <alternativeName>
        <fullName>Histone H3-K9 methyltransferase</fullName>
        <shortName>H3-K9-HMTase</shortName>
    </alternativeName>
    <alternativeName>
        <fullName>Protein suppressor of variegation 3-9</fullName>
    </alternativeName>
</protein>
<evidence type="ECO:0000250" key="1"/>
<evidence type="ECO:0000250" key="2">
    <source>
        <dbReference type="UniProtKB" id="P45975"/>
    </source>
</evidence>
<evidence type="ECO:0000255" key="3">
    <source>
        <dbReference type="PROSITE-ProRule" id="PRU00053"/>
    </source>
</evidence>
<evidence type="ECO:0000255" key="4">
    <source>
        <dbReference type="PROSITE-ProRule" id="PRU00155"/>
    </source>
</evidence>
<evidence type="ECO:0000255" key="5">
    <source>
        <dbReference type="PROSITE-ProRule" id="PRU00157"/>
    </source>
</evidence>
<evidence type="ECO:0000255" key="6">
    <source>
        <dbReference type="PROSITE-ProRule" id="PRU00190"/>
    </source>
</evidence>
<sequence>MATAEAQVNVNRNLQKQDLRNLEVSNLTPLSPEVISRQATINIGTIGHVAHGKSTVVKAISGVQTVRFKNELERNITIKLERLSEKKIKLLLKSKHQRHKYDIQQQKLLRILAERRKARAMTPLAPASVLAPSMETARPRLRSTSLNSLSPSNSSGYGSILGCDDSDQSSQLVLKPNVLKRRRSNCVQIPTPAAKRSRKNDGTTVKRRPKGEYIVEKIESVEVVQFQPVFFVKWLGYDVSANTWESYVNLSDCAEMEKFVERHLQLHQHYIAQITGELDTQLSDIPQTEDLKTISIAEIDAYDPLELQIDFILLAQYRAAASRSQREPERIGARALHRMQVRRSHFARRKQLIDLLLFEHRMNRVELPSPPIRVENNWDLDTIDSGFKYIQKNIIGEGVPKPQAGLVGCMCRHQSGEQCTASSMCCGRMAGEIFAYDRTTGRLRLRPGSAIYECNSRCSCDESCTNRVVQNGRKHPLVLFKTSNGSGWGVRTPQPLKKGVFVCEYIGEIITCEEANERGKAYDDNGRTYLFDLDYNTSRDSEYTVDAANFGNISHFINHSCDPNLAVFPCWIEHLNTALPHLVFFTIRPIKAGEELSFDYIRADNEEVPYENLSTAARVQCRCGAANCRKVLF</sequence>
<keyword id="KW-0137">Centromere</keyword>
<keyword id="KW-0156">Chromatin regulator</keyword>
<keyword id="KW-0158">Chromosome</keyword>
<keyword id="KW-0479">Metal-binding</keyword>
<keyword id="KW-0489">Methyltransferase</keyword>
<keyword id="KW-0539">Nucleus</keyword>
<keyword id="KW-1185">Reference proteome</keyword>
<keyword id="KW-0678">Repressor</keyword>
<keyword id="KW-0949">S-adenosyl-L-methionine</keyword>
<keyword id="KW-0804">Transcription</keyword>
<keyword id="KW-0805">Transcription regulation</keyword>
<keyword id="KW-0808">Transferase</keyword>
<keyword id="KW-0862">Zinc</keyword>
<reference key="1">
    <citation type="journal article" date="2005" name="Genome Res.">
        <title>Comparative genome sequencing of Drosophila pseudoobscura: chromosomal, gene, and cis-element evolution.</title>
        <authorList>
            <person name="Richards S."/>
            <person name="Liu Y."/>
            <person name="Bettencourt B.R."/>
            <person name="Hradecky P."/>
            <person name="Letovsky S."/>
            <person name="Nielsen R."/>
            <person name="Thornton K."/>
            <person name="Hubisz M.J."/>
            <person name="Chen R."/>
            <person name="Meisel R.P."/>
            <person name="Couronne O."/>
            <person name="Hua S."/>
            <person name="Smith M.A."/>
            <person name="Zhang P."/>
            <person name="Liu J."/>
            <person name="Bussemaker H.J."/>
            <person name="van Batenburg M.F."/>
            <person name="Howells S.L."/>
            <person name="Scherer S.E."/>
            <person name="Sodergren E."/>
            <person name="Matthews B.B."/>
            <person name="Crosby M.A."/>
            <person name="Schroeder A.J."/>
            <person name="Ortiz-Barrientos D."/>
            <person name="Rives C.M."/>
            <person name="Metzker M.L."/>
            <person name="Muzny D.M."/>
            <person name="Scott G."/>
            <person name="Steffen D."/>
            <person name="Wheeler D.A."/>
            <person name="Worley K.C."/>
            <person name="Havlak P."/>
            <person name="Durbin K.J."/>
            <person name="Egan A."/>
            <person name="Gill R."/>
            <person name="Hume J."/>
            <person name="Morgan M.B."/>
            <person name="Miner G."/>
            <person name="Hamilton C."/>
            <person name="Huang Y."/>
            <person name="Waldron L."/>
            <person name="Verduzco D."/>
            <person name="Clerc-Blankenburg K.P."/>
            <person name="Dubchak I."/>
            <person name="Noor M.A.F."/>
            <person name="Anderson W."/>
            <person name="White K.P."/>
            <person name="Clark A.G."/>
            <person name="Schaeffer S.W."/>
            <person name="Gelbart W.M."/>
            <person name="Weinstock G.M."/>
            <person name="Gibbs R.A."/>
        </authorList>
    </citation>
    <scope>NUCLEOTIDE SEQUENCE [LARGE SCALE GENOMIC DNA]</scope>
    <source>
        <strain>MV2-25 / Tucson 14011-0121.94</strain>
    </source>
</reference>
<name>SUV39_DROPS</name>
<gene>
    <name type="primary">Su(var)3-9</name>
    <name type="ORF">GA19622</name>
</gene>
<organism>
    <name type="scientific">Drosophila pseudoobscura pseudoobscura</name>
    <name type="common">Fruit fly</name>
    <dbReference type="NCBI Taxonomy" id="46245"/>
    <lineage>
        <taxon>Eukaryota</taxon>
        <taxon>Metazoa</taxon>
        <taxon>Ecdysozoa</taxon>
        <taxon>Arthropoda</taxon>
        <taxon>Hexapoda</taxon>
        <taxon>Insecta</taxon>
        <taxon>Pterygota</taxon>
        <taxon>Neoptera</taxon>
        <taxon>Endopterygota</taxon>
        <taxon>Diptera</taxon>
        <taxon>Brachycera</taxon>
        <taxon>Muscomorpha</taxon>
        <taxon>Ephydroidea</taxon>
        <taxon>Drosophilidae</taxon>
        <taxon>Drosophila</taxon>
        <taxon>Sophophora</taxon>
    </lineage>
</organism>
<dbReference type="EC" id="2.1.1.355" evidence="2"/>
<dbReference type="EMBL" id="CM000070">
    <property type="protein sequence ID" value="EAL29045.3"/>
    <property type="molecule type" value="Genomic_DNA"/>
</dbReference>
<dbReference type="SMR" id="Q294B9"/>
<dbReference type="FunCoup" id="Q294B9">
    <property type="interactions" value="1602"/>
</dbReference>
<dbReference type="STRING" id="46245.Q294B9"/>
<dbReference type="EnsemblMetazoa" id="FBtr0310181">
    <property type="protein sequence ID" value="FBpp0301866"/>
    <property type="gene ID" value="FBgn0079618"/>
</dbReference>
<dbReference type="GeneID" id="4803095"/>
<dbReference type="KEGG" id="dpo:4803095"/>
<dbReference type="eggNOG" id="KOG1082">
    <property type="taxonomic scope" value="Eukaryota"/>
</dbReference>
<dbReference type="HOGENOM" id="CLU_020840_8_1_1"/>
<dbReference type="InParanoid" id="Q294B9"/>
<dbReference type="PhylomeDB" id="Q294B9"/>
<dbReference type="Proteomes" id="UP000001819">
    <property type="component" value="Chromosome 2"/>
</dbReference>
<dbReference type="Bgee" id="FBgn0079618">
    <property type="expression patterns" value="Expressed in female reproductive system and 3 other cell types or tissues"/>
</dbReference>
<dbReference type="ExpressionAtlas" id="Q294B9">
    <property type="expression patterns" value="baseline"/>
</dbReference>
<dbReference type="GO" id="GO:0000775">
    <property type="term" value="C:chromosome, centromeric region"/>
    <property type="evidence" value="ECO:0007669"/>
    <property type="project" value="UniProtKB-SubCell"/>
</dbReference>
<dbReference type="GO" id="GO:0000781">
    <property type="term" value="C:chromosome, telomeric region"/>
    <property type="evidence" value="ECO:0007669"/>
    <property type="project" value="GOC"/>
</dbReference>
<dbReference type="GO" id="GO:0005634">
    <property type="term" value="C:nucleus"/>
    <property type="evidence" value="ECO:0007669"/>
    <property type="project" value="UniProtKB-SubCell"/>
</dbReference>
<dbReference type="GO" id="GO:0140949">
    <property type="term" value="F:histone H3K9 trimethyltransferase activity"/>
    <property type="evidence" value="ECO:0007669"/>
    <property type="project" value="UniProtKB-EC"/>
</dbReference>
<dbReference type="GO" id="GO:0042054">
    <property type="term" value="F:histone methyltransferase activity"/>
    <property type="evidence" value="ECO:0000250"/>
    <property type="project" value="UniProtKB"/>
</dbReference>
<dbReference type="GO" id="GO:0008270">
    <property type="term" value="F:zinc ion binding"/>
    <property type="evidence" value="ECO:0007669"/>
    <property type="project" value="InterPro"/>
</dbReference>
<dbReference type="GO" id="GO:0006325">
    <property type="term" value="P:chromatin organization"/>
    <property type="evidence" value="ECO:0000250"/>
    <property type="project" value="UniProtKB"/>
</dbReference>
<dbReference type="GO" id="GO:0032259">
    <property type="term" value="P:methylation"/>
    <property type="evidence" value="ECO:0007669"/>
    <property type="project" value="UniProtKB-KW"/>
</dbReference>
<dbReference type="GO" id="GO:0031508">
    <property type="term" value="P:pericentric heterochromatin formation"/>
    <property type="evidence" value="ECO:0000250"/>
    <property type="project" value="UniProtKB"/>
</dbReference>
<dbReference type="GO" id="GO:0031509">
    <property type="term" value="P:subtelomeric heterochromatin formation"/>
    <property type="evidence" value="ECO:0000250"/>
    <property type="project" value="UniProtKB"/>
</dbReference>
<dbReference type="CDD" id="cd00024">
    <property type="entry name" value="CD_CSD"/>
    <property type="match status" value="1"/>
</dbReference>
<dbReference type="CDD" id="cd10542">
    <property type="entry name" value="SET_SUV39H"/>
    <property type="match status" value="1"/>
</dbReference>
<dbReference type="FunFam" id="2.40.50.40:FF:000051">
    <property type="entry name" value="Histone-lysine N-methyltransferase"/>
    <property type="match status" value="1"/>
</dbReference>
<dbReference type="FunFam" id="3.40.50.300:FF:002336">
    <property type="entry name" value="Histone-lysine N-methyltransferase Su(var)3-9"/>
    <property type="match status" value="1"/>
</dbReference>
<dbReference type="Gene3D" id="2.40.50.40">
    <property type="match status" value="1"/>
</dbReference>
<dbReference type="Gene3D" id="3.40.50.300">
    <property type="entry name" value="P-loop containing nucleotide triphosphate hydrolases"/>
    <property type="match status" value="1"/>
</dbReference>
<dbReference type="Gene3D" id="2.170.270.10">
    <property type="entry name" value="SET domain"/>
    <property type="match status" value="1"/>
</dbReference>
<dbReference type="InterPro" id="IPR016197">
    <property type="entry name" value="Chromo-like_dom_sf"/>
</dbReference>
<dbReference type="InterPro" id="IPR000953">
    <property type="entry name" value="Chromo/chromo_shadow_dom"/>
</dbReference>
<dbReference type="InterPro" id="IPR023780">
    <property type="entry name" value="Chromo_domain"/>
</dbReference>
<dbReference type="InterPro" id="IPR023779">
    <property type="entry name" value="Chromodomain_CS"/>
</dbReference>
<dbReference type="InterPro" id="IPR011381">
    <property type="entry name" value="H3-K9_MeTrfase_SUV39H1/2-like"/>
</dbReference>
<dbReference type="InterPro" id="IPR050973">
    <property type="entry name" value="H3K9_Histone-Lys_N-MTase"/>
</dbReference>
<dbReference type="InterPro" id="IPR027417">
    <property type="entry name" value="P-loop_NTPase"/>
</dbReference>
<dbReference type="InterPro" id="IPR003616">
    <property type="entry name" value="Post-SET_dom"/>
</dbReference>
<dbReference type="InterPro" id="IPR007728">
    <property type="entry name" value="Pre-SET_dom"/>
</dbReference>
<dbReference type="InterPro" id="IPR001214">
    <property type="entry name" value="SET_dom"/>
</dbReference>
<dbReference type="InterPro" id="IPR046341">
    <property type="entry name" value="SET_dom_sf"/>
</dbReference>
<dbReference type="PANTHER" id="PTHR46223">
    <property type="entry name" value="HISTONE-LYSINE N-METHYLTRANSFERASE SUV39H"/>
    <property type="match status" value="1"/>
</dbReference>
<dbReference type="PANTHER" id="PTHR46223:SF4">
    <property type="entry name" value="HISTONE-LYSINE N-METHYLTRANSFERASE-RELATED"/>
    <property type="match status" value="1"/>
</dbReference>
<dbReference type="Pfam" id="PF00385">
    <property type="entry name" value="Chromo"/>
    <property type="match status" value="1"/>
</dbReference>
<dbReference type="Pfam" id="PF05033">
    <property type="entry name" value="Pre-SET"/>
    <property type="match status" value="1"/>
</dbReference>
<dbReference type="Pfam" id="PF00856">
    <property type="entry name" value="SET"/>
    <property type="match status" value="1"/>
</dbReference>
<dbReference type="PIRSF" id="PIRSF009343">
    <property type="entry name" value="SUV39_SET"/>
    <property type="match status" value="1"/>
</dbReference>
<dbReference type="SMART" id="SM00298">
    <property type="entry name" value="CHROMO"/>
    <property type="match status" value="1"/>
</dbReference>
<dbReference type="SMART" id="SM00508">
    <property type="entry name" value="PostSET"/>
    <property type="match status" value="1"/>
</dbReference>
<dbReference type="SMART" id="SM00468">
    <property type="entry name" value="PreSET"/>
    <property type="match status" value="1"/>
</dbReference>
<dbReference type="SMART" id="SM00317">
    <property type="entry name" value="SET"/>
    <property type="match status" value="1"/>
</dbReference>
<dbReference type="SUPFAM" id="SSF54160">
    <property type="entry name" value="Chromo domain-like"/>
    <property type="match status" value="1"/>
</dbReference>
<dbReference type="SUPFAM" id="SSF52540">
    <property type="entry name" value="P-loop containing nucleoside triphosphate hydrolases"/>
    <property type="match status" value="1"/>
</dbReference>
<dbReference type="SUPFAM" id="SSF82199">
    <property type="entry name" value="SET domain"/>
    <property type="match status" value="1"/>
</dbReference>
<dbReference type="PROSITE" id="PS00598">
    <property type="entry name" value="CHROMO_1"/>
    <property type="match status" value="1"/>
</dbReference>
<dbReference type="PROSITE" id="PS50013">
    <property type="entry name" value="CHROMO_2"/>
    <property type="match status" value="1"/>
</dbReference>
<dbReference type="PROSITE" id="PS50868">
    <property type="entry name" value="POST_SET"/>
    <property type="match status" value="1"/>
</dbReference>
<dbReference type="PROSITE" id="PS50867">
    <property type="entry name" value="PRE_SET"/>
    <property type="match status" value="1"/>
</dbReference>
<dbReference type="PROSITE" id="PS50280">
    <property type="entry name" value="SET"/>
    <property type="match status" value="1"/>
</dbReference>
<comment type="function">
    <text evidence="1">Histone methyltransferase that specifically trimethylates 'Lys-9' of histone H3 using monomethylated H3 'Lys-9' as substrate. H3 'Lys-9' trimethylation represents a specific tag for epigenetic transcriptional repression by recruiting Su(var)205/HP1 to methylated histones. Mainly functions in heterochromatin regions, thereby playing a central role in the establishment of constitutive heterochromatin at pericentric regions. Involved in heterochromatic gene silencing including the modification of position-effect-variegation (By similarity).</text>
</comment>
<comment type="catalytic activity">
    <reaction evidence="2">
        <text>L-lysyl(9)-[histone H3] + 3 S-adenosyl-L-methionine = N(6),N(6),N(6)-trimethyl-L-lysyl(9)-[histone H3] + 3 S-adenosyl-L-homocysteine + 3 H(+)</text>
        <dbReference type="Rhea" id="RHEA:60276"/>
        <dbReference type="Rhea" id="RHEA-COMP:15538"/>
        <dbReference type="Rhea" id="RHEA-COMP:15546"/>
        <dbReference type="ChEBI" id="CHEBI:15378"/>
        <dbReference type="ChEBI" id="CHEBI:29969"/>
        <dbReference type="ChEBI" id="CHEBI:57856"/>
        <dbReference type="ChEBI" id="CHEBI:59789"/>
        <dbReference type="ChEBI" id="CHEBI:61961"/>
        <dbReference type="EC" id="2.1.1.355"/>
    </reaction>
</comment>
<comment type="subunit">
    <text evidence="1">Interacts with Su(var)205 and Su(var)3-7. Probably associates with HDAC1/Rpd3 (By similarity).</text>
</comment>
<comment type="subcellular location">
    <subcellularLocation>
        <location evidence="1">Nucleus</location>
    </subcellularLocation>
    <subcellularLocation>
        <location evidence="1">Chromosome</location>
        <location evidence="1">Centromere</location>
    </subcellularLocation>
    <text evidence="1">Associates with centromeric constitutive heterochromatin.</text>
</comment>
<comment type="domain">
    <text evidence="1">Although the SET domain contains the active site of enzymatic activity, both pre-SET and post-SET domains are required for methyltransferase activity. The SET domain also participates in stable binding to heterochromatin (By similarity).</text>
</comment>
<comment type="domain">
    <text evidence="1">In the pre-SET domain, Cys residues bind 3 zinc ions that are arranged in a triangular cluster; some of these Cys residues contribute to the binding of two zinc ions within the cluster.</text>
</comment>
<comment type="similarity">
    <text evidence="6">Belongs to the class V-like SAM-binding methyltransferase superfamily. Histone-lysine methyltransferase family. Suvar3-9 subfamily.</text>
</comment>
<proteinExistence type="inferred from homology"/>
<accession>Q294B9</accession>